<feature type="chain" id="PRO_1000123330" description="Probable endonuclease 4">
    <location>
        <begin position="1"/>
        <end position="278"/>
    </location>
</feature>
<feature type="binding site" evidence="1">
    <location>
        <position position="66"/>
    </location>
    <ligand>
        <name>Zn(2+)</name>
        <dbReference type="ChEBI" id="CHEBI:29105"/>
        <label>1</label>
    </ligand>
</feature>
<feature type="binding site" evidence="1">
    <location>
        <position position="106"/>
    </location>
    <ligand>
        <name>Zn(2+)</name>
        <dbReference type="ChEBI" id="CHEBI:29105"/>
        <label>1</label>
    </ligand>
</feature>
<feature type="binding site" evidence="1">
    <location>
        <position position="142"/>
    </location>
    <ligand>
        <name>Zn(2+)</name>
        <dbReference type="ChEBI" id="CHEBI:29105"/>
        <label>1</label>
    </ligand>
</feature>
<feature type="binding site" evidence="1">
    <location>
        <position position="142"/>
    </location>
    <ligand>
        <name>Zn(2+)</name>
        <dbReference type="ChEBI" id="CHEBI:29105"/>
        <label>2</label>
    </ligand>
</feature>
<feature type="binding site" evidence="1">
    <location>
        <position position="176"/>
    </location>
    <ligand>
        <name>Zn(2+)</name>
        <dbReference type="ChEBI" id="CHEBI:29105"/>
        <label>2</label>
    </ligand>
</feature>
<feature type="binding site" evidence="1">
    <location>
        <position position="179"/>
    </location>
    <ligand>
        <name>Zn(2+)</name>
        <dbReference type="ChEBI" id="CHEBI:29105"/>
        <label>3</label>
    </ligand>
</feature>
<feature type="binding site" evidence="1">
    <location>
        <position position="213"/>
    </location>
    <ligand>
        <name>Zn(2+)</name>
        <dbReference type="ChEBI" id="CHEBI:29105"/>
        <label>2</label>
    </ligand>
</feature>
<feature type="binding site" evidence="1">
    <location>
        <position position="226"/>
    </location>
    <ligand>
        <name>Zn(2+)</name>
        <dbReference type="ChEBI" id="CHEBI:29105"/>
        <label>3</label>
    </ligand>
</feature>
<feature type="binding site" evidence="1">
    <location>
        <position position="228"/>
    </location>
    <ligand>
        <name>Zn(2+)</name>
        <dbReference type="ChEBI" id="CHEBI:29105"/>
        <label>3</label>
    </ligand>
</feature>
<feature type="binding site" evidence="1">
    <location>
        <position position="258"/>
    </location>
    <ligand>
        <name>Zn(2+)</name>
        <dbReference type="ChEBI" id="CHEBI:29105"/>
        <label>2</label>
    </ligand>
</feature>
<organism>
    <name type="scientific">Halothermothrix orenii (strain H 168 / OCM 544 / DSM 9562)</name>
    <dbReference type="NCBI Taxonomy" id="373903"/>
    <lineage>
        <taxon>Bacteria</taxon>
        <taxon>Bacillati</taxon>
        <taxon>Bacillota</taxon>
        <taxon>Clostridia</taxon>
        <taxon>Halanaerobiales</taxon>
        <taxon>Halothermotrichaceae</taxon>
        <taxon>Halothermothrix</taxon>
    </lineage>
</organism>
<protein>
    <recommendedName>
        <fullName evidence="1">Probable endonuclease 4</fullName>
        <ecNumber evidence="1">3.1.21.2</ecNumber>
    </recommendedName>
    <alternativeName>
        <fullName evidence="1">Endodeoxyribonuclease IV</fullName>
    </alternativeName>
    <alternativeName>
        <fullName evidence="1">Endonuclease IV</fullName>
    </alternativeName>
</protein>
<accession>B8CW79</accession>
<keyword id="KW-0227">DNA damage</keyword>
<keyword id="KW-0234">DNA repair</keyword>
<keyword id="KW-0255">Endonuclease</keyword>
<keyword id="KW-0378">Hydrolase</keyword>
<keyword id="KW-0479">Metal-binding</keyword>
<keyword id="KW-0540">Nuclease</keyword>
<keyword id="KW-1185">Reference proteome</keyword>
<keyword id="KW-0862">Zinc</keyword>
<reference key="1">
    <citation type="journal article" date="2009" name="PLoS ONE">
        <title>Genome analysis of the anaerobic thermohalophilic bacterium Halothermothrix orenii.</title>
        <authorList>
            <person name="Mavromatis K."/>
            <person name="Ivanova N."/>
            <person name="Anderson I."/>
            <person name="Lykidis A."/>
            <person name="Hooper S.D."/>
            <person name="Sun H."/>
            <person name="Kunin V."/>
            <person name="Lapidus A."/>
            <person name="Hugenholtz P."/>
            <person name="Patel B."/>
            <person name="Kyrpides N.C."/>
        </authorList>
    </citation>
    <scope>NUCLEOTIDE SEQUENCE [LARGE SCALE GENOMIC DNA]</scope>
    <source>
        <strain>H 168 / OCM 544 / DSM 9562</strain>
    </source>
</reference>
<sequence>MRLGKHVSIAGGLYKATDRATKIGCNALQIFVKNPRGWKIKEVSDSEIKKLKDNIKKENMYPLVVHSSYLINMATPRDELWEKSVNSLKKEYKRTELINADYFVVHPGSHTGKGLHFGINRIIEAINSVFGEVKNGPQLLLENVAGAGSSIGSNFTELRDIINKVDDYARIGVCLDTCHAFAAGYDLRYEDGLEELLNDFDKIIGLDLLKVIHLNDSKYGLASNKDEHAHIGEGEIGEKGISNIINHPLLKDKPFILETPKFSGRDKDVELVNLLRRD</sequence>
<dbReference type="EC" id="3.1.21.2" evidence="1"/>
<dbReference type="EMBL" id="CP001098">
    <property type="protein sequence ID" value="ACL69548.1"/>
    <property type="molecule type" value="Genomic_DNA"/>
</dbReference>
<dbReference type="RefSeq" id="WP_012635736.1">
    <property type="nucleotide sequence ID" value="NC_011899.1"/>
</dbReference>
<dbReference type="SMR" id="B8CW79"/>
<dbReference type="STRING" id="373903.Hore_07910"/>
<dbReference type="KEGG" id="hor:Hore_07910"/>
<dbReference type="eggNOG" id="COG0648">
    <property type="taxonomic scope" value="Bacteria"/>
</dbReference>
<dbReference type="HOGENOM" id="CLU_025885_0_1_9"/>
<dbReference type="OrthoDB" id="9805666at2"/>
<dbReference type="Proteomes" id="UP000000719">
    <property type="component" value="Chromosome"/>
</dbReference>
<dbReference type="GO" id="GO:0008833">
    <property type="term" value="F:deoxyribonuclease IV (phage-T4-induced) activity"/>
    <property type="evidence" value="ECO:0007669"/>
    <property type="project" value="UniProtKB-UniRule"/>
</dbReference>
<dbReference type="GO" id="GO:0003677">
    <property type="term" value="F:DNA binding"/>
    <property type="evidence" value="ECO:0007669"/>
    <property type="project" value="InterPro"/>
</dbReference>
<dbReference type="GO" id="GO:0003906">
    <property type="term" value="F:DNA-(apurinic or apyrimidinic site) endonuclease activity"/>
    <property type="evidence" value="ECO:0007669"/>
    <property type="project" value="TreeGrafter"/>
</dbReference>
<dbReference type="GO" id="GO:0008081">
    <property type="term" value="F:phosphoric diester hydrolase activity"/>
    <property type="evidence" value="ECO:0007669"/>
    <property type="project" value="TreeGrafter"/>
</dbReference>
<dbReference type="GO" id="GO:0008270">
    <property type="term" value="F:zinc ion binding"/>
    <property type="evidence" value="ECO:0007669"/>
    <property type="project" value="UniProtKB-UniRule"/>
</dbReference>
<dbReference type="GO" id="GO:0006284">
    <property type="term" value="P:base-excision repair"/>
    <property type="evidence" value="ECO:0007669"/>
    <property type="project" value="TreeGrafter"/>
</dbReference>
<dbReference type="CDD" id="cd00019">
    <property type="entry name" value="AP2Ec"/>
    <property type="match status" value="1"/>
</dbReference>
<dbReference type="FunFam" id="3.20.20.150:FF:000001">
    <property type="entry name" value="Probable endonuclease 4"/>
    <property type="match status" value="1"/>
</dbReference>
<dbReference type="Gene3D" id="3.20.20.150">
    <property type="entry name" value="Divalent-metal-dependent TIM barrel enzymes"/>
    <property type="match status" value="1"/>
</dbReference>
<dbReference type="HAMAP" id="MF_00152">
    <property type="entry name" value="Nfo"/>
    <property type="match status" value="1"/>
</dbReference>
<dbReference type="InterPro" id="IPR001719">
    <property type="entry name" value="AP_endonuc_2"/>
</dbReference>
<dbReference type="InterPro" id="IPR018246">
    <property type="entry name" value="AP_endonuc_F2_Zn_BS"/>
</dbReference>
<dbReference type="InterPro" id="IPR036237">
    <property type="entry name" value="Xyl_isomerase-like_sf"/>
</dbReference>
<dbReference type="InterPro" id="IPR013022">
    <property type="entry name" value="Xyl_isomerase-like_TIM-brl"/>
</dbReference>
<dbReference type="NCBIfam" id="TIGR00587">
    <property type="entry name" value="nfo"/>
    <property type="match status" value="1"/>
</dbReference>
<dbReference type="PANTHER" id="PTHR21445:SF0">
    <property type="entry name" value="APURINIC-APYRIMIDINIC ENDONUCLEASE"/>
    <property type="match status" value="1"/>
</dbReference>
<dbReference type="PANTHER" id="PTHR21445">
    <property type="entry name" value="ENDONUCLEASE IV ENDODEOXYRIBONUCLEASE IV"/>
    <property type="match status" value="1"/>
</dbReference>
<dbReference type="Pfam" id="PF01261">
    <property type="entry name" value="AP_endonuc_2"/>
    <property type="match status" value="1"/>
</dbReference>
<dbReference type="SMART" id="SM00518">
    <property type="entry name" value="AP2Ec"/>
    <property type="match status" value="1"/>
</dbReference>
<dbReference type="SUPFAM" id="SSF51658">
    <property type="entry name" value="Xylose isomerase-like"/>
    <property type="match status" value="1"/>
</dbReference>
<dbReference type="PROSITE" id="PS00729">
    <property type="entry name" value="AP_NUCLEASE_F2_1"/>
    <property type="match status" value="1"/>
</dbReference>
<dbReference type="PROSITE" id="PS00730">
    <property type="entry name" value="AP_NUCLEASE_F2_2"/>
    <property type="match status" value="1"/>
</dbReference>
<dbReference type="PROSITE" id="PS00731">
    <property type="entry name" value="AP_NUCLEASE_F2_3"/>
    <property type="match status" value="1"/>
</dbReference>
<dbReference type="PROSITE" id="PS51432">
    <property type="entry name" value="AP_NUCLEASE_F2_4"/>
    <property type="match status" value="1"/>
</dbReference>
<evidence type="ECO:0000255" key="1">
    <source>
        <dbReference type="HAMAP-Rule" id="MF_00152"/>
    </source>
</evidence>
<comment type="function">
    <text evidence="1">Endonuclease IV plays a role in DNA repair. It cleaves phosphodiester bonds at apurinic or apyrimidinic (AP) sites, generating a 3'-hydroxyl group and a 5'-terminal sugar phosphate.</text>
</comment>
<comment type="catalytic activity">
    <reaction evidence="1">
        <text>Endonucleolytic cleavage to 5'-phosphooligonucleotide end-products.</text>
        <dbReference type="EC" id="3.1.21.2"/>
    </reaction>
</comment>
<comment type="cofactor">
    <cofactor evidence="1">
        <name>Zn(2+)</name>
        <dbReference type="ChEBI" id="CHEBI:29105"/>
    </cofactor>
    <text evidence="1">Binds 3 Zn(2+) ions.</text>
</comment>
<comment type="similarity">
    <text evidence="1">Belongs to the AP endonuclease 2 family.</text>
</comment>
<proteinExistence type="inferred from homology"/>
<name>END4_HALOH</name>
<gene>
    <name evidence="1" type="primary">nfo</name>
    <name type="ordered locus">Hore_07910</name>
</gene>